<sequence>MRIYLIGFMCSGKSTVGSLLSRSLNIPFYDVDEEVQKREGLSIPQIFEKKGEAYFRKLEFEVLKDLSEKENVVISTGGGLGANEEALNFMKSRGTTVFIDIPFEVFLERCKDSKERPLLKRPLDEIKNLFEERRKIYSKADIKVKGEKPPEEVVKEILLSLEGNALGG</sequence>
<gene>
    <name evidence="1" type="primary">aroK</name>
    <name type="ordered locus">aq_2177</name>
</gene>
<comment type="function">
    <text evidence="1">Catalyzes the specific phosphorylation of the 3-hydroxyl group of shikimic acid using ATP as a cosubstrate.</text>
</comment>
<comment type="catalytic activity">
    <reaction evidence="1">
        <text>shikimate + ATP = 3-phosphoshikimate + ADP + H(+)</text>
        <dbReference type="Rhea" id="RHEA:13121"/>
        <dbReference type="ChEBI" id="CHEBI:15378"/>
        <dbReference type="ChEBI" id="CHEBI:30616"/>
        <dbReference type="ChEBI" id="CHEBI:36208"/>
        <dbReference type="ChEBI" id="CHEBI:145989"/>
        <dbReference type="ChEBI" id="CHEBI:456216"/>
        <dbReference type="EC" id="2.7.1.71"/>
    </reaction>
</comment>
<comment type="cofactor">
    <cofactor evidence="1">
        <name>Mg(2+)</name>
        <dbReference type="ChEBI" id="CHEBI:18420"/>
    </cofactor>
    <text evidence="1">Binds 1 Mg(2+) ion per subunit.</text>
</comment>
<comment type="pathway">
    <text evidence="1">Metabolic intermediate biosynthesis; chorismate biosynthesis; chorismate from D-erythrose 4-phosphate and phosphoenolpyruvate: step 5/7.</text>
</comment>
<comment type="subunit">
    <text evidence="1">Monomer.</text>
</comment>
<comment type="subcellular location">
    <subcellularLocation>
        <location evidence="1">Cytoplasm</location>
    </subcellularLocation>
</comment>
<comment type="similarity">
    <text evidence="1">Belongs to the shikimate kinase family.</text>
</comment>
<protein>
    <recommendedName>
        <fullName evidence="1">Shikimate kinase</fullName>
        <shortName evidence="1">SK</shortName>
        <ecNumber evidence="1">2.7.1.71</ecNumber>
    </recommendedName>
</protein>
<evidence type="ECO:0000255" key="1">
    <source>
        <dbReference type="HAMAP-Rule" id="MF_00109"/>
    </source>
</evidence>
<evidence type="ECO:0007829" key="2">
    <source>
        <dbReference type="PDB" id="2PT5"/>
    </source>
</evidence>
<proteinExistence type="evidence at protein level"/>
<feature type="chain" id="PRO_0000192366" description="Shikimate kinase">
    <location>
        <begin position="1"/>
        <end position="168"/>
    </location>
</feature>
<feature type="binding site" evidence="1">
    <location>
        <begin position="10"/>
        <end position="15"/>
    </location>
    <ligand>
        <name>ATP</name>
        <dbReference type="ChEBI" id="CHEBI:30616"/>
    </ligand>
</feature>
<feature type="binding site" evidence="1">
    <location>
        <position position="14"/>
    </location>
    <ligand>
        <name>Mg(2+)</name>
        <dbReference type="ChEBI" id="CHEBI:18420"/>
    </ligand>
</feature>
<feature type="binding site" evidence="1">
    <location>
        <position position="32"/>
    </location>
    <ligand>
        <name>substrate</name>
    </ligand>
</feature>
<feature type="binding site" evidence="1">
    <location>
        <position position="56"/>
    </location>
    <ligand>
        <name>substrate</name>
    </ligand>
</feature>
<feature type="binding site" evidence="1">
    <location>
        <position position="78"/>
    </location>
    <ligand>
        <name>substrate</name>
    </ligand>
</feature>
<feature type="binding site" evidence="1">
    <location>
        <position position="116"/>
    </location>
    <ligand>
        <name>ATP</name>
        <dbReference type="ChEBI" id="CHEBI:30616"/>
    </ligand>
</feature>
<feature type="binding site" evidence="1">
    <location>
        <position position="133"/>
    </location>
    <ligand>
        <name>substrate</name>
    </ligand>
</feature>
<feature type="strand" evidence="2">
    <location>
        <begin position="2"/>
        <end position="7"/>
    </location>
</feature>
<feature type="helix" evidence="2">
    <location>
        <begin position="13"/>
        <end position="24"/>
    </location>
</feature>
<feature type="strand" evidence="2">
    <location>
        <begin position="28"/>
        <end position="30"/>
    </location>
</feature>
<feature type="helix" evidence="2">
    <location>
        <begin position="31"/>
        <end position="39"/>
    </location>
</feature>
<feature type="helix" evidence="2">
    <location>
        <begin position="43"/>
        <end position="49"/>
    </location>
</feature>
<feature type="helix" evidence="2">
    <location>
        <begin position="52"/>
        <end position="66"/>
    </location>
</feature>
<feature type="strand" evidence="2">
    <location>
        <begin position="69"/>
        <end position="75"/>
    </location>
</feature>
<feature type="helix" evidence="2">
    <location>
        <begin position="78"/>
        <end position="81"/>
    </location>
</feature>
<feature type="helix" evidence="2">
    <location>
        <begin position="84"/>
        <end position="91"/>
    </location>
</feature>
<feature type="strand" evidence="2">
    <location>
        <begin position="94"/>
        <end position="100"/>
    </location>
</feature>
<feature type="helix" evidence="2">
    <location>
        <begin position="103"/>
        <end position="109"/>
    </location>
</feature>
<feature type="helix" evidence="2">
    <location>
        <begin position="118"/>
        <end position="120"/>
    </location>
</feature>
<feature type="helix" evidence="2">
    <location>
        <begin position="123"/>
        <end position="125"/>
    </location>
</feature>
<feature type="helix" evidence="2">
    <location>
        <begin position="127"/>
        <end position="137"/>
    </location>
</feature>
<feature type="strand" evidence="2">
    <location>
        <begin position="140"/>
        <end position="145"/>
    </location>
</feature>
<feature type="helix" evidence="2">
    <location>
        <begin position="150"/>
        <end position="162"/>
    </location>
</feature>
<name>AROK_AQUAE</name>
<accession>O67925</accession>
<dbReference type="EC" id="2.7.1.71" evidence="1"/>
<dbReference type="EMBL" id="AE000657">
    <property type="protein sequence ID" value="AAC07875.1"/>
    <property type="molecule type" value="Genomic_DNA"/>
</dbReference>
<dbReference type="PIR" id="A70487">
    <property type="entry name" value="A70487"/>
</dbReference>
<dbReference type="RefSeq" id="NP_214494.1">
    <property type="nucleotide sequence ID" value="NC_000918.1"/>
</dbReference>
<dbReference type="RefSeq" id="WP_010881430.1">
    <property type="nucleotide sequence ID" value="NC_000918.1"/>
</dbReference>
<dbReference type="PDB" id="2PT5">
    <property type="method" value="X-ray"/>
    <property type="resolution" value="2.10 A"/>
    <property type="chains" value="A/B/C/D=1-168"/>
</dbReference>
<dbReference type="PDBsum" id="2PT5"/>
<dbReference type="SMR" id="O67925"/>
<dbReference type="FunCoup" id="O67925">
    <property type="interactions" value="449"/>
</dbReference>
<dbReference type="STRING" id="224324.aq_2177"/>
<dbReference type="EnsemblBacteria" id="AAC07875">
    <property type="protein sequence ID" value="AAC07875"/>
    <property type="gene ID" value="aq_2177"/>
</dbReference>
<dbReference type="KEGG" id="aae:aq_2177"/>
<dbReference type="PATRIC" id="fig|224324.8.peg.1683"/>
<dbReference type="eggNOG" id="COG0703">
    <property type="taxonomic scope" value="Bacteria"/>
</dbReference>
<dbReference type="HOGENOM" id="CLU_057607_4_0_0"/>
<dbReference type="InParanoid" id="O67925"/>
<dbReference type="OrthoDB" id="9800332at2"/>
<dbReference type="UniPathway" id="UPA00053">
    <property type="reaction ID" value="UER00088"/>
</dbReference>
<dbReference type="EvolutionaryTrace" id="O67925"/>
<dbReference type="Proteomes" id="UP000000798">
    <property type="component" value="Chromosome"/>
</dbReference>
<dbReference type="GO" id="GO:0005829">
    <property type="term" value="C:cytosol"/>
    <property type="evidence" value="ECO:0000318"/>
    <property type="project" value="GO_Central"/>
</dbReference>
<dbReference type="GO" id="GO:0005524">
    <property type="term" value="F:ATP binding"/>
    <property type="evidence" value="ECO:0007669"/>
    <property type="project" value="UniProtKB-UniRule"/>
</dbReference>
<dbReference type="GO" id="GO:0000287">
    <property type="term" value="F:magnesium ion binding"/>
    <property type="evidence" value="ECO:0007669"/>
    <property type="project" value="UniProtKB-UniRule"/>
</dbReference>
<dbReference type="GO" id="GO:0004765">
    <property type="term" value="F:shikimate kinase activity"/>
    <property type="evidence" value="ECO:0000318"/>
    <property type="project" value="GO_Central"/>
</dbReference>
<dbReference type="GO" id="GO:0008652">
    <property type="term" value="P:amino acid biosynthetic process"/>
    <property type="evidence" value="ECO:0007669"/>
    <property type="project" value="UniProtKB-KW"/>
</dbReference>
<dbReference type="GO" id="GO:0009073">
    <property type="term" value="P:aromatic amino acid family biosynthetic process"/>
    <property type="evidence" value="ECO:0007669"/>
    <property type="project" value="UniProtKB-KW"/>
</dbReference>
<dbReference type="GO" id="GO:0009423">
    <property type="term" value="P:chorismate biosynthetic process"/>
    <property type="evidence" value="ECO:0007669"/>
    <property type="project" value="UniProtKB-UniRule"/>
</dbReference>
<dbReference type="CDD" id="cd00464">
    <property type="entry name" value="SK"/>
    <property type="match status" value="1"/>
</dbReference>
<dbReference type="Gene3D" id="3.40.50.300">
    <property type="entry name" value="P-loop containing nucleotide triphosphate hydrolases"/>
    <property type="match status" value="1"/>
</dbReference>
<dbReference type="HAMAP" id="MF_00109">
    <property type="entry name" value="Shikimate_kinase"/>
    <property type="match status" value="1"/>
</dbReference>
<dbReference type="InterPro" id="IPR027417">
    <property type="entry name" value="P-loop_NTPase"/>
</dbReference>
<dbReference type="InterPro" id="IPR031322">
    <property type="entry name" value="Shikimate/glucono_kinase"/>
</dbReference>
<dbReference type="InterPro" id="IPR000623">
    <property type="entry name" value="Shikimate_kinase/TSH1"/>
</dbReference>
<dbReference type="InterPro" id="IPR023000">
    <property type="entry name" value="Shikimate_kinase_CS"/>
</dbReference>
<dbReference type="PANTHER" id="PTHR21087">
    <property type="entry name" value="SHIKIMATE KINASE"/>
    <property type="match status" value="1"/>
</dbReference>
<dbReference type="PANTHER" id="PTHR21087:SF16">
    <property type="entry name" value="SHIKIMATE KINASE 1, CHLOROPLASTIC"/>
    <property type="match status" value="1"/>
</dbReference>
<dbReference type="Pfam" id="PF01202">
    <property type="entry name" value="SKI"/>
    <property type="match status" value="1"/>
</dbReference>
<dbReference type="PRINTS" id="PR01100">
    <property type="entry name" value="SHIKIMTKNASE"/>
</dbReference>
<dbReference type="SUPFAM" id="SSF52540">
    <property type="entry name" value="P-loop containing nucleoside triphosphate hydrolases"/>
    <property type="match status" value="1"/>
</dbReference>
<dbReference type="PROSITE" id="PS01128">
    <property type="entry name" value="SHIKIMATE_KINASE"/>
    <property type="match status" value="1"/>
</dbReference>
<reference key="1">
    <citation type="journal article" date="1998" name="Nature">
        <title>The complete genome of the hyperthermophilic bacterium Aquifex aeolicus.</title>
        <authorList>
            <person name="Deckert G."/>
            <person name="Warren P.V."/>
            <person name="Gaasterland T."/>
            <person name="Young W.G."/>
            <person name="Lenox A.L."/>
            <person name="Graham D.E."/>
            <person name="Overbeek R."/>
            <person name="Snead M.A."/>
            <person name="Keller M."/>
            <person name="Aujay M."/>
            <person name="Huber R."/>
            <person name="Feldman R.A."/>
            <person name="Short J.M."/>
            <person name="Olsen G.J."/>
            <person name="Swanson R.V."/>
        </authorList>
    </citation>
    <scope>NUCLEOTIDE SEQUENCE [LARGE SCALE GENOMIC DNA]</scope>
    <source>
        <strain>VF5</strain>
    </source>
</reference>
<reference key="2">
    <citation type="submission" date="2008-05" db="PDB data bank">
        <title>Crystal structure of shikimate kinase (aq_2177) from Aquifex aeolicus VF5.</title>
        <authorList>
            <consortium name="RIKEN structural genomics initiative (RSGI)"/>
        </authorList>
    </citation>
    <scope>X-RAY CRYSTALLOGRAPHY (2.1 ANGSTROMS)</scope>
</reference>
<keyword id="KW-0002">3D-structure</keyword>
<keyword id="KW-0028">Amino-acid biosynthesis</keyword>
<keyword id="KW-0057">Aromatic amino acid biosynthesis</keyword>
<keyword id="KW-0067">ATP-binding</keyword>
<keyword id="KW-0963">Cytoplasm</keyword>
<keyword id="KW-0418">Kinase</keyword>
<keyword id="KW-0460">Magnesium</keyword>
<keyword id="KW-0479">Metal-binding</keyword>
<keyword id="KW-0547">Nucleotide-binding</keyword>
<keyword id="KW-1185">Reference proteome</keyword>
<keyword id="KW-0808">Transferase</keyword>
<organism>
    <name type="scientific">Aquifex aeolicus (strain VF5)</name>
    <dbReference type="NCBI Taxonomy" id="224324"/>
    <lineage>
        <taxon>Bacteria</taxon>
        <taxon>Pseudomonadati</taxon>
        <taxon>Aquificota</taxon>
        <taxon>Aquificia</taxon>
        <taxon>Aquificales</taxon>
        <taxon>Aquificaceae</taxon>
        <taxon>Aquifex</taxon>
    </lineage>
</organism>